<comment type="miscellaneous">
    <text>The mRNA was isolated from an IgE-secreting immunocytoma that arises spontaneously in LOU/C/WsL rats.</text>
</comment>
<keyword id="KW-1064">Adaptive immunity</keyword>
<keyword id="KW-0391">Immunity</keyword>
<keyword id="KW-1280">Immunoglobulin</keyword>
<keyword id="KW-1185">Reference proteome</keyword>
<keyword id="KW-0732">Signal</keyword>
<name>HVR01_RAT</name>
<dbReference type="PIR" id="A02075">
    <property type="entry name" value="EVRTR2"/>
</dbReference>
<dbReference type="SMR" id="P01805"/>
<dbReference type="FunCoup" id="P01805">
    <property type="interactions" value="404"/>
</dbReference>
<dbReference type="STRING" id="10116.ENSRNOP00000067650"/>
<dbReference type="PaxDb" id="10116-ENSRNOP00000067650"/>
<dbReference type="eggNOG" id="ENOG502S5S3">
    <property type="taxonomic scope" value="Eukaryota"/>
</dbReference>
<dbReference type="InParanoid" id="P01805"/>
<dbReference type="PhylomeDB" id="P01805"/>
<dbReference type="Proteomes" id="UP000002494">
    <property type="component" value="Unplaced"/>
</dbReference>
<dbReference type="GO" id="GO:0005576">
    <property type="term" value="C:extracellular region"/>
    <property type="evidence" value="ECO:0007669"/>
    <property type="project" value="UniProtKB-ARBA"/>
</dbReference>
<dbReference type="GO" id="GO:0019814">
    <property type="term" value="C:immunoglobulin complex"/>
    <property type="evidence" value="ECO:0007669"/>
    <property type="project" value="UniProtKB-KW"/>
</dbReference>
<dbReference type="GO" id="GO:0003823">
    <property type="term" value="F:antigen binding"/>
    <property type="evidence" value="ECO:0000318"/>
    <property type="project" value="GO_Central"/>
</dbReference>
<dbReference type="GO" id="GO:0016064">
    <property type="term" value="P:immunoglobulin mediated immune response"/>
    <property type="evidence" value="ECO:0000318"/>
    <property type="project" value="GO_Central"/>
</dbReference>
<dbReference type="CDD" id="cd04981">
    <property type="entry name" value="IgV_H"/>
    <property type="match status" value="1"/>
</dbReference>
<dbReference type="FunFam" id="2.60.40.10:FF:001372">
    <property type="entry name" value="Ig heavy chain V region M603"/>
    <property type="match status" value="1"/>
</dbReference>
<dbReference type="Gene3D" id="2.60.40.10">
    <property type="entry name" value="Immunoglobulins"/>
    <property type="match status" value="1"/>
</dbReference>
<dbReference type="InterPro" id="IPR007110">
    <property type="entry name" value="Ig-like_dom"/>
</dbReference>
<dbReference type="InterPro" id="IPR036179">
    <property type="entry name" value="Ig-like_dom_sf"/>
</dbReference>
<dbReference type="InterPro" id="IPR013783">
    <property type="entry name" value="Ig-like_fold"/>
</dbReference>
<dbReference type="InterPro" id="IPR003599">
    <property type="entry name" value="Ig_sub"/>
</dbReference>
<dbReference type="InterPro" id="IPR013106">
    <property type="entry name" value="Ig_V-set"/>
</dbReference>
<dbReference type="InterPro" id="IPR050199">
    <property type="entry name" value="IgHV"/>
</dbReference>
<dbReference type="PANTHER" id="PTHR23266">
    <property type="entry name" value="IMMUNOGLOBULIN HEAVY CHAIN"/>
    <property type="match status" value="1"/>
</dbReference>
<dbReference type="Pfam" id="PF07686">
    <property type="entry name" value="V-set"/>
    <property type="match status" value="1"/>
</dbReference>
<dbReference type="SMART" id="SM00409">
    <property type="entry name" value="IG"/>
    <property type="match status" value="1"/>
</dbReference>
<dbReference type="SMART" id="SM00406">
    <property type="entry name" value="IGv"/>
    <property type="match status" value="1"/>
</dbReference>
<dbReference type="SUPFAM" id="SSF48726">
    <property type="entry name" value="Immunoglobulin"/>
    <property type="match status" value="1"/>
</dbReference>
<dbReference type="PROSITE" id="PS50835">
    <property type="entry name" value="IG_LIKE"/>
    <property type="match status" value="1"/>
</dbReference>
<sequence>MDLRLTYVFIVAILKGVLCEVKLEESGGGLVQPGMSVKLSCATSGFTFSDYWMEWVRQAPGKGLEWVAEIRNKANNYVAYYGKSLKGRFTLSRDDSKSIVYLQMNNIRSEDTGIYYCSRGYGGYSENWFVYWGQGTLVTVSS</sequence>
<accession>P01805</accession>
<proteinExistence type="predicted"/>
<reference key="1">
    <citation type="journal article" date="1982" name="Nucleic Acids Res.">
        <title>Structure and evolution of the heavy chain from rat immunoglobulin E.</title>
        <authorList>
            <person name="Hellman L."/>
            <person name="Pettersson U."/>
            <person name="Engstroem A."/>
            <person name="Karlsson T."/>
            <person name="Bennich H."/>
        </authorList>
    </citation>
    <scope>NUCLEOTIDE SEQUENCE</scope>
</reference>
<organism>
    <name type="scientific">Rattus norvegicus</name>
    <name type="common">Rat</name>
    <dbReference type="NCBI Taxonomy" id="10116"/>
    <lineage>
        <taxon>Eukaryota</taxon>
        <taxon>Metazoa</taxon>
        <taxon>Chordata</taxon>
        <taxon>Craniata</taxon>
        <taxon>Vertebrata</taxon>
        <taxon>Euteleostomi</taxon>
        <taxon>Mammalia</taxon>
        <taxon>Eutheria</taxon>
        <taxon>Euarchontoglires</taxon>
        <taxon>Glires</taxon>
        <taxon>Rodentia</taxon>
        <taxon>Myomorpha</taxon>
        <taxon>Muroidea</taxon>
        <taxon>Muridae</taxon>
        <taxon>Murinae</taxon>
        <taxon>Rattus</taxon>
    </lineage>
</organism>
<feature type="signal peptide">
    <location>
        <begin position="1"/>
        <end position="19"/>
    </location>
</feature>
<feature type="chain" id="PRO_0000015215" description="Ig heavy chain V region IR2">
    <location>
        <begin position="20"/>
        <end position="142"/>
    </location>
</feature>
<feature type="domain" description="Ig-like">
    <location>
        <begin position="20"/>
        <end position="133"/>
    </location>
</feature>
<feature type="non-terminal residue">
    <location>
        <position position="142"/>
    </location>
</feature>
<protein>
    <recommendedName>
        <fullName>Ig heavy chain V region IR2</fullName>
    </recommendedName>
</protein>